<sequence>MTEPLKPRIDFDGPLDVDQNPEFRAQQTFDENQAQNFAPATLDEAPEEEGQVEAVMDAALRPKRSLWRKMVMGGLALFGASVVGQGVQWTMNAWQTQDWVALGGCAAGALIIGAGVGSVVTEWRRLWRLRQRAHERDEARDLLHSHGTGKGRAFCEKLAQQAGIDQSHPALQRWYASIHETQNDREVVSLYAHLVQPVLDAQARREISRSAAESTLMIAVSPLALVDMAFIAWRNLRLINRIATLYGIELGYYSRLRLFKLVLLNIAFAGASELVREVGMDWMSQDLAARLSTRAAQGIGAGLLTARLGIKAMELCRPLPWLDDDKPRLGDFRRQLIGQVKETLQKGKTPSEK</sequence>
<keyword id="KW-0997">Cell inner membrane</keyword>
<keyword id="KW-1003">Cell membrane</keyword>
<keyword id="KW-0472">Membrane</keyword>
<keyword id="KW-0812">Transmembrane</keyword>
<keyword id="KW-1133">Transmembrane helix</keyword>
<reference key="1">
    <citation type="journal article" date="2009" name="PLoS Genet.">
        <title>Organised genome dynamics in the Escherichia coli species results in highly diverse adaptive paths.</title>
        <authorList>
            <person name="Touchon M."/>
            <person name="Hoede C."/>
            <person name="Tenaillon O."/>
            <person name="Barbe V."/>
            <person name="Baeriswyl S."/>
            <person name="Bidet P."/>
            <person name="Bingen E."/>
            <person name="Bonacorsi S."/>
            <person name="Bouchier C."/>
            <person name="Bouvet O."/>
            <person name="Calteau A."/>
            <person name="Chiapello H."/>
            <person name="Clermont O."/>
            <person name="Cruveiller S."/>
            <person name="Danchin A."/>
            <person name="Diard M."/>
            <person name="Dossat C."/>
            <person name="Karoui M.E."/>
            <person name="Frapy E."/>
            <person name="Garry L."/>
            <person name="Ghigo J.M."/>
            <person name="Gilles A.M."/>
            <person name="Johnson J."/>
            <person name="Le Bouguenec C."/>
            <person name="Lescat M."/>
            <person name="Mangenot S."/>
            <person name="Martinez-Jehanne V."/>
            <person name="Matic I."/>
            <person name="Nassif X."/>
            <person name="Oztas S."/>
            <person name="Petit M.A."/>
            <person name="Pichon C."/>
            <person name="Rouy Z."/>
            <person name="Ruf C.S."/>
            <person name="Schneider D."/>
            <person name="Tourret J."/>
            <person name="Vacherie B."/>
            <person name="Vallenet D."/>
            <person name="Medigue C."/>
            <person name="Rocha E.P.C."/>
            <person name="Denamur E."/>
        </authorList>
    </citation>
    <scope>NUCLEOTIDE SEQUENCE [LARGE SCALE GENOMIC DNA]</scope>
    <source>
        <strain>IAI39 / ExPEC</strain>
    </source>
</reference>
<feature type="chain" id="PRO_1000136882" description="UPF0283 membrane protein YcjF">
    <location>
        <begin position="1"/>
        <end position="353"/>
    </location>
</feature>
<feature type="transmembrane region" description="Helical" evidence="1">
    <location>
        <begin position="70"/>
        <end position="90"/>
    </location>
</feature>
<feature type="transmembrane region" description="Helical" evidence="1">
    <location>
        <begin position="100"/>
        <end position="120"/>
    </location>
</feature>
<feature type="transmembrane region" description="Helical" evidence="1">
    <location>
        <begin position="213"/>
        <end position="233"/>
    </location>
</feature>
<protein>
    <recommendedName>
        <fullName evidence="1">UPF0283 membrane protein YcjF</fullName>
    </recommendedName>
</protein>
<comment type="subcellular location">
    <subcellularLocation>
        <location evidence="1">Cell inner membrane</location>
        <topology evidence="1">Multi-pass membrane protein</topology>
    </subcellularLocation>
</comment>
<comment type="similarity">
    <text evidence="1">Belongs to the UPF0283 family.</text>
</comment>
<organism>
    <name type="scientific">Escherichia coli O7:K1 (strain IAI39 / ExPEC)</name>
    <dbReference type="NCBI Taxonomy" id="585057"/>
    <lineage>
        <taxon>Bacteria</taxon>
        <taxon>Pseudomonadati</taxon>
        <taxon>Pseudomonadota</taxon>
        <taxon>Gammaproteobacteria</taxon>
        <taxon>Enterobacterales</taxon>
        <taxon>Enterobacteriaceae</taxon>
        <taxon>Escherichia</taxon>
    </lineage>
</organism>
<gene>
    <name evidence="1" type="primary">ycjF</name>
    <name type="ordered locus">ECIAI39_1674</name>
</gene>
<dbReference type="EMBL" id="CU928164">
    <property type="protein sequence ID" value="CAR17805.1"/>
    <property type="molecule type" value="Genomic_DNA"/>
</dbReference>
<dbReference type="RefSeq" id="WP_000138696.1">
    <property type="nucleotide sequence ID" value="NC_011750.1"/>
</dbReference>
<dbReference type="RefSeq" id="YP_002407674.1">
    <property type="nucleotide sequence ID" value="NC_011750.1"/>
</dbReference>
<dbReference type="STRING" id="585057.ECIAI39_1674"/>
<dbReference type="KEGG" id="ect:ECIAI39_1674"/>
<dbReference type="PATRIC" id="fig|585057.6.peg.1747"/>
<dbReference type="HOGENOM" id="CLU_057693_2_0_6"/>
<dbReference type="Proteomes" id="UP000000749">
    <property type="component" value="Chromosome"/>
</dbReference>
<dbReference type="GO" id="GO:0005886">
    <property type="term" value="C:plasma membrane"/>
    <property type="evidence" value="ECO:0007669"/>
    <property type="project" value="UniProtKB-SubCell"/>
</dbReference>
<dbReference type="HAMAP" id="MF_01085">
    <property type="entry name" value="UPF0283"/>
    <property type="match status" value="1"/>
</dbReference>
<dbReference type="InterPro" id="IPR021147">
    <property type="entry name" value="DUF697"/>
</dbReference>
<dbReference type="InterPro" id="IPR006507">
    <property type="entry name" value="UPF0283"/>
</dbReference>
<dbReference type="NCBIfam" id="TIGR01620">
    <property type="entry name" value="hyp_HI0043"/>
    <property type="match status" value="1"/>
</dbReference>
<dbReference type="PANTHER" id="PTHR39342">
    <property type="entry name" value="UPF0283 MEMBRANE PROTEIN YCJF"/>
    <property type="match status" value="1"/>
</dbReference>
<dbReference type="PANTHER" id="PTHR39342:SF1">
    <property type="entry name" value="UPF0283 MEMBRANE PROTEIN YCJF"/>
    <property type="match status" value="1"/>
</dbReference>
<dbReference type="Pfam" id="PF05128">
    <property type="entry name" value="DUF697"/>
    <property type="match status" value="1"/>
</dbReference>
<proteinExistence type="inferred from homology"/>
<evidence type="ECO:0000255" key="1">
    <source>
        <dbReference type="HAMAP-Rule" id="MF_01085"/>
    </source>
</evidence>
<name>YCJF_ECO7I</name>
<accession>B7NHM5</accession>